<keyword id="KW-0002">3D-structure</keyword>
<keyword id="KW-1185">Reference proteome</keyword>
<keyword id="KW-0687">Ribonucleoprotein</keyword>
<keyword id="KW-0689">Ribosomal protein</keyword>
<comment type="similarity">
    <text evidence="2">Belongs to the universal ribosomal protein uL15 family.</text>
</comment>
<feature type="chain" id="PRO_0000104893" description="Large ribosomal subunit protein uL15">
    <location>
        <begin position="1"/>
        <end position="147"/>
    </location>
</feature>
<feature type="region of interest" description="Disordered" evidence="1">
    <location>
        <begin position="1"/>
        <end position="34"/>
    </location>
</feature>
<feature type="compositionally biased region" description="Basic residues" evidence="1">
    <location>
        <begin position="1"/>
        <end position="15"/>
    </location>
</feature>
<gene>
    <name type="primary">RPL27A</name>
    <name type="ordered locus">ECU10_0990</name>
</gene>
<organism>
    <name type="scientific">Encephalitozoon cuniculi (strain GB-M1)</name>
    <name type="common">Microsporidian parasite</name>
    <dbReference type="NCBI Taxonomy" id="284813"/>
    <lineage>
        <taxon>Eukaryota</taxon>
        <taxon>Fungi</taxon>
        <taxon>Fungi incertae sedis</taxon>
        <taxon>Microsporidia</taxon>
        <taxon>Unikaryonidae</taxon>
        <taxon>Encephalitozoon</taxon>
    </lineage>
</organism>
<evidence type="ECO:0000256" key="1">
    <source>
        <dbReference type="SAM" id="MobiDB-lite"/>
    </source>
</evidence>
<evidence type="ECO:0000305" key="2"/>
<reference key="1">
    <citation type="journal article" date="1998" name="Mol. Biochem. Parasitol.">
        <title>A small spliceosomal-type intron occurs in a ribosomal protein gene of the microsporidian Encephalitozoon cuniculi.</title>
        <authorList>
            <person name="Biderre C."/>
            <person name="Metenier G."/>
            <person name="Vivares C.P."/>
        </authorList>
    </citation>
    <scope>NUCLEOTIDE SEQUENCE [GENOMIC DNA]</scope>
</reference>
<reference key="2">
    <citation type="journal article" date="2001" name="Nature">
        <title>Genome sequence and gene compaction of the eukaryote parasite Encephalitozoon cuniculi.</title>
        <authorList>
            <person name="Katinka M.D."/>
            <person name="Duprat S."/>
            <person name="Cornillot E."/>
            <person name="Metenier G."/>
            <person name="Thomarat F."/>
            <person name="Prensier G."/>
            <person name="Barbe V."/>
            <person name="Peyretaillade E."/>
            <person name="Brottier P."/>
            <person name="Wincker P."/>
            <person name="Delbac F."/>
            <person name="El Alaoui H."/>
            <person name="Peyret P."/>
            <person name="Saurin W."/>
            <person name="Gouy M."/>
            <person name="Weissenbach J."/>
            <person name="Vivares C.P."/>
        </authorList>
    </citation>
    <scope>NUCLEOTIDE SEQUENCE [LARGE SCALE GENOMIC DNA]</scope>
    <source>
        <strain>GB-M1</strain>
    </source>
</reference>
<sequence length="147" mass="17027">MTDRVKKTRKLRGHVSHGYGRVGKHRKHSGGRGLAGGFSHMKTFFTRFHPDYHGKRGMRVYHRKENSDYARPISSARLWGMIPKEQRYDFLDNPEKVPVIDVREFGYHVVVGGKLSLERPIVVKARYFTPSAKEEITKVGGKWIITY</sequence>
<protein>
    <recommendedName>
        <fullName evidence="2">Large ribosomal subunit protein uL15</fullName>
    </recommendedName>
    <alternativeName>
        <fullName>60S ribosomal protein L27a</fullName>
    </alternativeName>
</protein>
<name>RL27A_ENCCU</name>
<accession>O62581</accession>
<dbReference type="EMBL" id="AF054829">
    <property type="protein sequence ID" value="AAC68578.1"/>
    <property type="molecule type" value="Genomic_DNA"/>
</dbReference>
<dbReference type="EMBL" id="AL590449">
    <property type="protein sequence ID" value="CAD25818.1"/>
    <property type="molecule type" value="Genomic_DNA"/>
</dbReference>
<dbReference type="RefSeq" id="NP_586214.1">
    <property type="nucleotide sequence ID" value="NM_001042047.1"/>
</dbReference>
<dbReference type="PDB" id="7QEP">
    <property type="method" value="EM"/>
    <property type="resolution" value="2.70 A"/>
    <property type="chains" value="N8=1-147"/>
</dbReference>
<dbReference type="PDBsum" id="7QEP"/>
<dbReference type="EMDB" id="EMD-13936"/>
<dbReference type="SMR" id="O62581"/>
<dbReference type="FunCoup" id="O62581">
    <property type="interactions" value="183"/>
</dbReference>
<dbReference type="STRING" id="284813.O62581"/>
<dbReference type="GeneID" id="859863"/>
<dbReference type="KEGG" id="ecu:ECU10_0990"/>
<dbReference type="VEuPathDB" id="MicrosporidiaDB:ECU10_0990"/>
<dbReference type="HOGENOM" id="CLU_109163_1_0_1"/>
<dbReference type="InParanoid" id="O62581"/>
<dbReference type="OMA" id="WGRVGQH"/>
<dbReference type="OrthoDB" id="61900at2759"/>
<dbReference type="Proteomes" id="UP000000819">
    <property type="component" value="Chromosome X"/>
</dbReference>
<dbReference type="GO" id="GO:0022625">
    <property type="term" value="C:cytosolic large ribosomal subunit"/>
    <property type="evidence" value="ECO:0007669"/>
    <property type="project" value="TreeGrafter"/>
</dbReference>
<dbReference type="GO" id="GO:0003735">
    <property type="term" value="F:structural constituent of ribosome"/>
    <property type="evidence" value="ECO:0007669"/>
    <property type="project" value="InterPro"/>
</dbReference>
<dbReference type="GO" id="GO:0006412">
    <property type="term" value="P:translation"/>
    <property type="evidence" value="ECO:0007669"/>
    <property type="project" value="InterPro"/>
</dbReference>
<dbReference type="Gene3D" id="3.100.10.10">
    <property type="match status" value="1"/>
</dbReference>
<dbReference type="Gene3D" id="4.10.990.10">
    <property type="match status" value="1"/>
</dbReference>
<dbReference type="HAMAP" id="MF_01341">
    <property type="entry name" value="Ribosomal_uL15"/>
    <property type="match status" value="1"/>
</dbReference>
<dbReference type="InterPro" id="IPR027386">
    <property type="entry name" value="Rbsml_uL15_N"/>
</dbReference>
<dbReference type="InterPro" id="IPR030878">
    <property type="entry name" value="Ribosomal_uL15"/>
</dbReference>
<dbReference type="InterPro" id="IPR021131">
    <property type="entry name" value="Ribosomal_uL15/eL18"/>
</dbReference>
<dbReference type="InterPro" id="IPR036227">
    <property type="entry name" value="Ribosomal_uL15/eL18_sf"/>
</dbReference>
<dbReference type="PANTHER" id="PTHR11721">
    <property type="entry name" value="60S RIBOSOMAL PROTEIN L27A"/>
    <property type="match status" value="1"/>
</dbReference>
<dbReference type="PANTHER" id="PTHR11721:SF3">
    <property type="entry name" value="LARGE RIBOSOMAL SUBUNIT PROTEIN UL15"/>
    <property type="match status" value="1"/>
</dbReference>
<dbReference type="Pfam" id="PF00828">
    <property type="entry name" value="Ribosomal_L27A"/>
    <property type="match status" value="1"/>
</dbReference>
<dbReference type="SUPFAM" id="SSF52080">
    <property type="entry name" value="Ribosomal proteins L15p and L18e"/>
    <property type="match status" value="1"/>
</dbReference>
<proteinExistence type="evidence at protein level"/>